<comment type="function">
    <text evidence="1">Methylates ribosomal protein L11.</text>
</comment>
<comment type="catalytic activity">
    <reaction evidence="1">
        <text>L-lysyl-[protein] + 3 S-adenosyl-L-methionine = N(6),N(6),N(6)-trimethyl-L-lysyl-[protein] + 3 S-adenosyl-L-homocysteine + 3 H(+)</text>
        <dbReference type="Rhea" id="RHEA:54192"/>
        <dbReference type="Rhea" id="RHEA-COMP:9752"/>
        <dbReference type="Rhea" id="RHEA-COMP:13826"/>
        <dbReference type="ChEBI" id="CHEBI:15378"/>
        <dbReference type="ChEBI" id="CHEBI:29969"/>
        <dbReference type="ChEBI" id="CHEBI:57856"/>
        <dbReference type="ChEBI" id="CHEBI:59789"/>
        <dbReference type="ChEBI" id="CHEBI:61961"/>
    </reaction>
</comment>
<comment type="subcellular location">
    <subcellularLocation>
        <location evidence="1">Cytoplasm</location>
    </subcellularLocation>
</comment>
<comment type="similarity">
    <text evidence="1">Belongs to the methyltransferase superfamily. PrmA family.</text>
</comment>
<dbReference type="EC" id="2.1.1.-" evidence="1"/>
<dbReference type="EMBL" id="CR628337">
    <property type="protein sequence ID" value="CAH14733.1"/>
    <property type="molecule type" value="Genomic_DNA"/>
</dbReference>
<dbReference type="RefSeq" id="WP_011214713.1">
    <property type="nucleotide sequence ID" value="NC_006369.1"/>
</dbReference>
<dbReference type="SMR" id="Q5WZ79"/>
<dbReference type="KEGG" id="lpf:lpl0503"/>
<dbReference type="LegioList" id="lpl0503"/>
<dbReference type="HOGENOM" id="CLU_049382_4_1_6"/>
<dbReference type="Proteomes" id="UP000002517">
    <property type="component" value="Chromosome"/>
</dbReference>
<dbReference type="GO" id="GO:0005829">
    <property type="term" value="C:cytosol"/>
    <property type="evidence" value="ECO:0007669"/>
    <property type="project" value="TreeGrafter"/>
</dbReference>
<dbReference type="GO" id="GO:0016279">
    <property type="term" value="F:protein-lysine N-methyltransferase activity"/>
    <property type="evidence" value="ECO:0007669"/>
    <property type="project" value="TreeGrafter"/>
</dbReference>
<dbReference type="GO" id="GO:0032259">
    <property type="term" value="P:methylation"/>
    <property type="evidence" value="ECO:0007669"/>
    <property type="project" value="UniProtKB-KW"/>
</dbReference>
<dbReference type="CDD" id="cd02440">
    <property type="entry name" value="AdoMet_MTases"/>
    <property type="match status" value="1"/>
</dbReference>
<dbReference type="Gene3D" id="3.40.50.150">
    <property type="entry name" value="Vaccinia Virus protein VP39"/>
    <property type="match status" value="1"/>
</dbReference>
<dbReference type="HAMAP" id="MF_00735">
    <property type="entry name" value="Methyltr_PrmA"/>
    <property type="match status" value="1"/>
</dbReference>
<dbReference type="InterPro" id="IPR050078">
    <property type="entry name" value="Ribosomal_L11_MeTrfase_PrmA"/>
</dbReference>
<dbReference type="InterPro" id="IPR004498">
    <property type="entry name" value="Ribosomal_PrmA_MeTrfase"/>
</dbReference>
<dbReference type="InterPro" id="IPR029063">
    <property type="entry name" value="SAM-dependent_MTases_sf"/>
</dbReference>
<dbReference type="NCBIfam" id="TIGR00406">
    <property type="entry name" value="prmA"/>
    <property type="match status" value="1"/>
</dbReference>
<dbReference type="PANTHER" id="PTHR43648">
    <property type="entry name" value="ELECTRON TRANSFER FLAVOPROTEIN BETA SUBUNIT LYSINE METHYLTRANSFERASE"/>
    <property type="match status" value="1"/>
</dbReference>
<dbReference type="PANTHER" id="PTHR43648:SF1">
    <property type="entry name" value="ELECTRON TRANSFER FLAVOPROTEIN BETA SUBUNIT LYSINE METHYLTRANSFERASE"/>
    <property type="match status" value="1"/>
</dbReference>
<dbReference type="Pfam" id="PF06325">
    <property type="entry name" value="PrmA"/>
    <property type="match status" value="1"/>
</dbReference>
<dbReference type="PIRSF" id="PIRSF000401">
    <property type="entry name" value="RPL11_MTase"/>
    <property type="match status" value="1"/>
</dbReference>
<dbReference type="SUPFAM" id="SSF53335">
    <property type="entry name" value="S-adenosyl-L-methionine-dependent methyltransferases"/>
    <property type="match status" value="1"/>
</dbReference>
<sequence>MWFQLKIEHCPNDKIEEITEELEECGALSITLTDKNDNPVLEPEPGTTPLWPEVIIHALFAQAEEAQYAREQLVAKRPSLHCSLELLADKNWERAWMDDFRPQRFGNRLWVCPTWLPPPEPDAVNLILDPGLAFGTGTHATTSLCLTWLEQADLKNKSIIDYGCGSGILSLAAIKLGAKHVYAVDIDNQALQATQSNAHANHITESQLSISSPEALQNPVHLVIANILLAPLISLKERFHQLLPSGAHLVTSGILEEQAPLLIDAYDSAFTHIATEYCEGWSLLVFTSK</sequence>
<keyword id="KW-0963">Cytoplasm</keyword>
<keyword id="KW-0489">Methyltransferase</keyword>
<keyword id="KW-0949">S-adenosyl-L-methionine</keyword>
<keyword id="KW-0808">Transferase</keyword>
<evidence type="ECO:0000255" key="1">
    <source>
        <dbReference type="HAMAP-Rule" id="MF_00735"/>
    </source>
</evidence>
<name>PRMA_LEGPL</name>
<protein>
    <recommendedName>
        <fullName evidence="1">Ribosomal protein L11 methyltransferase</fullName>
        <shortName evidence="1">L11 Mtase</shortName>
        <ecNumber evidence="1">2.1.1.-</ecNumber>
    </recommendedName>
</protein>
<gene>
    <name evidence="1" type="primary">prmA</name>
    <name type="ordered locus">lpl0503</name>
</gene>
<proteinExistence type="inferred from homology"/>
<reference key="1">
    <citation type="journal article" date="2004" name="Nat. Genet.">
        <title>Evidence in the Legionella pneumophila genome for exploitation of host cell functions and high genome plasticity.</title>
        <authorList>
            <person name="Cazalet C."/>
            <person name="Rusniok C."/>
            <person name="Brueggemann H."/>
            <person name="Zidane N."/>
            <person name="Magnier A."/>
            <person name="Ma L."/>
            <person name="Tichit M."/>
            <person name="Jarraud S."/>
            <person name="Bouchier C."/>
            <person name="Vandenesch F."/>
            <person name="Kunst F."/>
            <person name="Etienne J."/>
            <person name="Glaser P."/>
            <person name="Buchrieser C."/>
        </authorList>
    </citation>
    <scope>NUCLEOTIDE SEQUENCE [LARGE SCALE GENOMIC DNA]</scope>
    <source>
        <strain>Lens</strain>
    </source>
</reference>
<accession>Q5WZ79</accession>
<feature type="chain" id="PRO_0000192274" description="Ribosomal protein L11 methyltransferase">
    <location>
        <begin position="1"/>
        <end position="289"/>
    </location>
</feature>
<feature type="binding site" evidence="1">
    <location>
        <position position="142"/>
    </location>
    <ligand>
        <name>S-adenosyl-L-methionine</name>
        <dbReference type="ChEBI" id="CHEBI:59789"/>
    </ligand>
</feature>
<feature type="binding site" evidence="1">
    <location>
        <position position="163"/>
    </location>
    <ligand>
        <name>S-adenosyl-L-methionine</name>
        <dbReference type="ChEBI" id="CHEBI:59789"/>
    </ligand>
</feature>
<feature type="binding site" evidence="1">
    <location>
        <position position="185"/>
    </location>
    <ligand>
        <name>S-adenosyl-L-methionine</name>
        <dbReference type="ChEBI" id="CHEBI:59789"/>
    </ligand>
</feature>
<feature type="binding site" evidence="1">
    <location>
        <position position="226"/>
    </location>
    <ligand>
        <name>S-adenosyl-L-methionine</name>
        <dbReference type="ChEBI" id="CHEBI:59789"/>
    </ligand>
</feature>
<organism>
    <name type="scientific">Legionella pneumophila (strain Lens)</name>
    <dbReference type="NCBI Taxonomy" id="297245"/>
    <lineage>
        <taxon>Bacteria</taxon>
        <taxon>Pseudomonadati</taxon>
        <taxon>Pseudomonadota</taxon>
        <taxon>Gammaproteobacteria</taxon>
        <taxon>Legionellales</taxon>
        <taxon>Legionellaceae</taxon>
        <taxon>Legionella</taxon>
    </lineage>
</organism>